<accession>Q28HF8</accession>
<accession>Q6DIM4</accession>
<reference key="1">
    <citation type="submission" date="2006-10" db="EMBL/GenBank/DDBJ databases">
        <authorList>
            <consortium name="Sanger Xenopus tropicalis EST/cDNA project"/>
        </authorList>
    </citation>
    <scope>NUCLEOTIDE SEQUENCE [LARGE SCALE MRNA] (ISOFORM 1)</scope>
    <source>
        <tissue>Tadpole</tissue>
    </source>
</reference>
<reference key="2">
    <citation type="submission" date="2004-06" db="EMBL/GenBank/DDBJ databases">
        <authorList>
            <consortium name="NIH - Xenopus Gene Collection (XGC) project"/>
        </authorList>
    </citation>
    <scope>NUCLEOTIDE SEQUENCE [LARGE SCALE MRNA] (ISOFORM 2)</scope>
    <source>
        <tissue>Embryo</tissue>
    </source>
</reference>
<evidence type="ECO:0000250" key="1">
    <source>
        <dbReference type="UniProtKB" id="Q0GE19"/>
    </source>
</evidence>
<evidence type="ECO:0000255" key="2"/>
<evidence type="ECO:0000303" key="3">
    <source ref="2"/>
</evidence>
<evidence type="ECO:0000305" key="4"/>
<sequence>MGLLERLRKEWFIVGIILVIAAAKLEPTIGGKGGPLKPEITITYIAVSAIFFNSGLSLKTEELTNALMHVKLHLFVQLFTLVFFPTAIWVFLQVLSLTPINEWLLKGLQTVSCMPPPVSSAVILTKAVGGNEAAAIFNSAFGSFLGIVVTPLLLLLFLGSSSSVPFTSIFSQLFMTVVVPLIIGQIVRRYIKDWLERKKPPFGAISSCVLLMIIYTTFCDTFSNPNIDLDTFSLVIIVFIIFFIQLAFMLLTFLFSTSKNTGFTPADTVAIVFCSTHKSLTLGIPMLKIVFAGYEHLSLISVPLLIYHPAQILLGSVLVPTIKSWMLSRQKALKLTRQPKVPL</sequence>
<dbReference type="EMBL" id="CR760903">
    <property type="protein sequence ID" value="CAJ82934.1"/>
    <property type="molecule type" value="mRNA"/>
</dbReference>
<dbReference type="EMBL" id="BC075513">
    <property type="protein sequence ID" value="AAH75513.1"/>
    <property type="molecule type" value="mRNA"/>
</dbReference>
<dbReference type="RefSeq" id="NP_001004977.2">
    <molecule id="Q28HF8-1"/>
    <property type="nucleotide sequence ID" value="NM_001004977.2"/>
</dbReference>
<dbReference type="SMR" id="Q28HF8"/>
<dbReference type="FunCoup" id="Q28HF8">
    <property type="interactions" value="2012"/>
</dbReference>
<dbReference type="STRING" id="8364.ENSXETP00000043917"/>
<dbReference type="GeneID" id="448418"/>
<dbReference type="KEGG" id="xtr:448418"/>
<dbReference type="AGR" id="Xenbase:XB-GENE-489389"/>
<dbReference type="CTD" id="84068"/>
<dbReference type="Xenbase" id="XB-GENE-489389">
    <property type="gene designation" value="slc10a7"/>
</dbReference>
<dbReference type="InParanoid" id="Q28HF8"/>
<dbReference type="OMA" id="LPIMIYH"/>
<dbReference type="OrthoDB" id="188035at2759"/>
<dbReference type="Proteomes" id="UP000008143">
    <property type="component" value="Chromosome 1"/>
</dbReference>
<dbReference type="Bgee" id="ENSXETG00000007119">
    <property type="expression patterns" value="Expressed in egg cell and 13 other cell types or tissues"/>
</dbReference>
<dbReference type="GO" id="GO:0005789">
    <property type="term" value="C:endoplasmic reticulum membrane"/>
    <property type="evidence" value="ECO:0007669"/>
    <property type="project" value="UniProtKB-SubCell"/>
</dbReference>
<dbReference type="GO" id="GO:0000139">
    <property type="term" value="C:Golgi membrane"/>
    <property type="evidence" value="ECO:0007669"/>
    <property type="project" value="UniProtKB-SubCell"/>
</dbReference>
<dbReference type="GO" id="GO:0005886">
    <property type="term" value="C:plasma membrane"/>
    <property type="evidence" value="ECO:0007669"/>
    <property type="project" value="UniProtKB-SubCell"/>
</dbReference>
<dbReference type="GO" id="GO:0015293">
    <property type="term" value="F:symporter activity"/>
    <property type="evidence" value="ECO:0007669"/>
    <property type="project" value="UniProtKB-KW"/>
</dbReference>
<dbReference type="GO" id="GO:0006814">
    <property type="term" value="P:sodium ion transport"/>
    <property type="evidence" value="ECO:0007669"/>
    <property type="project" value="UniProtKB-KW"/>
</dbReference>
<dbReference type="FunFam" id="1.20.1530.20:FF:000008">
    <property type="entry name" value="Sodium/bile acid cotransporter"/>
    <property type="match status" value="1"/>
</dbReference>
<dbReference type="Gene3D" id="1.20.1530.20">
    <property type="match status" value="1"/>
</dbReference>
<dbReference type="InterPro" id="IPR038770">
    <property type="entry name" value="Na+/solute_symporter_sf"/>
</dbReference>
<dbReference type="InterPro" id="IPR016833">
    <property type="entry name" value="Put_Na-Bile_cotransptr"/>
</dbReference>
<dbReference type="PANTHER" id="PTHR18640:SF5">
    <property type="entry name" value="SODIUM_BILE ACID COTRANSPORTER 7"/>
    <property type="match status" value="1"/>
</dbReference>
<dbReference type="PANTHER" id="PTHR18640">
    <property type="entry name" value="SOLUTE CARRIER FAMILY 10 MEMBER 7"/>
    <property type="match status" value="1"/>
</dbReference>
<dbReference type="Pfam" id="PF13593">
    <property type="entry name" value="SBF_like"/>
    <property type="match status" value="1"/>
</dbReference>
<dbReference type="PIRSF" id="PIRSF026166">
    <property type="entry name" value="UCP026166"/>
    <property type="match status" value="1"/>
</dbReference>
<organism>
    <name type="scientific">Xenopus tropicalis</name>
    <name type="common">Western clawed frog</name>
    <name type="synonym">Silurana tropicalis</name>
    <dbReference type="NCBI Taxonomy" id="8364"/>
    <lineage>
        <taxon>Eukaryota</taxon>
        <taxon>Metazoa</taxon>
        <taxon>Chordata</taxon>
        <taxon>Craniata</taxon>
        <taxon>Vertebrata</taxon>
        <taxon>Euteleostomi</taxon>
        <taxon>Amphibia</taxon>
        <taxon>Batrachia</taxon>
        <taxon>Anura</taxon>
        <taxon>Pipoidea</taxon>
        <taxon>Pipidae</taxon>
        <taxon>Xenopodinae</taxon>
        <taxon>Xenopus</taxon>
        <taxon>Silurana</taxon>
    </lineage>
</organism>
<feature type="chain" id="PRO_0000278257" description="Sodium/bile acid cotransporter 7">
    <location>
        <begin position="1"/>
        <end position="343"/>
    </location>
</feature>
<feature type="topological domain" description="Cytoplasmic" evidence="1">
    <location>
        <begin position="1"/>
        <end position="10"/>
    </location>
</feature>
<feature type="transmembrane region" description="Helical" evidence="2">
    <location>
        <begin position="11"/>
        <end position="31"/>
    </location>
</feature>
<feature type="topological domain" description="Extracellular" evidence="1">
    <location>
        <begin position="32"/>
        <end position="37"/>
    </location>
</feature>
<feature type="transmembrane region" description="Helical" evidence="2">
    <location>
        <begin position="38"/>
        <end position="58"/>
    </location>
</feature>
<feature type="topological domain" description="Cytoplasmic" evidence="1">
    <location>
        <begin position="59"/>
        <end position="71"/>
    </location>
</feature>
<feature type="transmembrane region" description="Helical" evidence="2">
    <location>
        <begin position="72"/>
        <end position="92"/>
    </location>
</feature>
<feature type="topological domain" description="Extracellular" evidence="1">
    <location>
        <begin position="93"/>
        <end position="116"/>
    </location>
</feature>
<feature type="transmembrane region" description="Helical" evidence="2">
    <location>
        <begin position="117"/>
        <end position="137"/>
    </location>
</feature>
<feature type="topological domain" description="Cytoplasmic" evidence="1">
    <location>
        <position position="138"/>
    </location>
</feature>
<feature type="transmembrane region" description="Helical" evidence="2">
    <location>
        <begin position="139"/>
        <end position="159"/>
    </location>
</feature>
<feature type="topological domain" description="Extracellular" evidence="1">
    <location>
        <begin position="160"/>
        <end position="163"/>
    </location>
</feature>
<feature type="transmembrane region" description="Helical" evidence="2">
    <location>
        <begin position="164"/>
        <end position="184"/>
    </location>
</feature>
<feature type="topological domain" description="Cytoplasmic" evidence="1">
    <location>
        <begin position="185"/>
        <end position="201"/>
    </location>
</feature>
<feature type="transmembrane region" description="Helical" evidence="2">
    <location>
        <begin position="202"/>
        <end position="222"/>
    </location>
</feature>
<feature type="topological domain" description="Extracellular" evidence="1">
    <location>
        <begin position="223"/>
        <end position="234"/>
    </location>
</feature>
<feature type="transmembrane region" description="Helical" evidence="2">
    <location>
        <begin position="235"/>
        <end position="255"/>
    </location>
</feature>
<feature type="topological domain" description="Cytoplasmic" evidence="1">
    <location>
        <begin position="256"/>
        <end position="270"/>
    </location>
</feature>
<feature type="transmembrane region" description="Helical" evidence="2">
    <location>
        <begin position="271"/>
        <end position="291"/>
    </location>
</feature>
<feature type="topological domain" description="Extracellular" evidence="1">
    <location>
        <begin position="292"/>
        <end position="298"/>
    </location>
</feature>
<feature type="transmembrane region" description="Helical" evidence="2">
    <location>
        <begin position="299"/>
        <end position="319"/>
    </location>
</feature>
<feature type="topological domain" description="Cytoplasmic" evidence="1">
    <location>
        <begin position="320"/>
        <end position="343"/>
    </location>
</feature>
<feature type="splice variant" id="VSP_023227" description="In isoform 2." evidence="3">
    <original>QTVSCMPPPVSSAVILTKAVGGNEAAAI</original>
    <variation>PLFSTLHLEVSWQCSRDSDSRNSSSSCC</variation>
    <location>
        <begin position="109"/>
        <end position="136"/>
    </location>
</feature>
<feature type="splice variant" id="VSP_023228" description="In isoform 2." evidence="3">
    <location>
        <begin position="137"/>
        <end position="343"/>
    </location>
</feature>
<proteinExistence type="evidence at transcript level"/>
<keyword id="KW-0025">Alternative splicing</keyword>
<keyword id="KW-1003">Cell membrane</keyword>
<keyword id="KW-0256">Endoplasmic reticulum</keyword>
<keyword id="KW-0333">Golgi apparatus</keyword>
<keyword id="KW-0406">Ion transport</keyword>
<keyword id="KW-0472">Membrane</keyword>
<keyword id="KW-1185">Reference proteome</keyword>
<keyword id="KW-0915">Sodium</keyword>
<keyword id="KW-0739">Sodium transport</keyword>
<keyword id="KW-0769">Symport</keyword>
<keyword id="KW-0812">Transmembrane</keyword>
<keyword id="KW-1133">Transmembrane helix</keyword>
<keyword id="KW-0813">Transport</keyword>
<comment type="function">
    <text evidence="1">Involved in teeth and skeletal development. Has an essential role in the biosynthesis and trafficking of glycosaminoglycans and glycoproteins to produce a proper functioning extracellular matrix. Required for extracellular matrix mineralization. Also involved in the regulation of cellular calcium homeostasis. Does not show transport activity towards bile acids or steroid sulfates.</text>
</comment>
<comment type="subcellular location">
    <subcellularLocation>
        <location evidence="1">Cell membrane</location>
        <topology evidence="1">Multi-pass membrane protein</topology>
    </subcellularLocation>
    <subcellularLocation>
        <location evidence="1">Endoplasmic reticulum membrane</location>
        <topology evidence="1">Multi-pass membrane protein</topology>
    </subcellularLocation>
    <subcellularLocation>
        <location evidence="1">Golgi apparatus membrane</location>
    </subcellularLocation>
</comment>
<comment type="alternative products">
    <event type="alternative splicing"/>
    <isoform>
        <id>Q28HF8-1</id>
        <name>1</name>
        <sequence type="displayed"/>
    </isoform>
    <isoform>
        <id>Q28HF8-2</id>
        <name>2</name>
        <sequence type="described" ref="VSP_023227 VSP_023228"/>
    </isoform>
</comment>
<comment type="similarity">
    <text evidence="4">Belongs to the bile acid:sodium symporter (BASS) (TC 2.A.28) family.</text>
</comment>
<gene>
    <name type="primary">slc10a7</name>
    <name type="ORF">TTpA006l10.1</name>
</gene>
<name>NTCP7_XENTR</name>
<protein>
    <recommendedName>
        <fullName>Sodium/bile acid cotransporter 7</fullName>
    </recommendedName>
    <alternativeName>
        <fullName>Na(+)/bile acid cotransporter 7</fullName>
    </alternativeName>
    <alternativeName>
        <fullName>Solute carrier family 10 member 7</fullName>
    </alternativeName>
</protein>